<name>PT117_YEAST</name>
<gene>
    <name type="primary">PET117</name>
    <name type="ordered locus">YER058W</name>
</gene>
<feature type="transit peptide" description="Mitochondrion" evidence="1">
    <location>
        <begin position="1"/>
        <end status="unknown"/>
    </location>
</feature>
<feature type="chain" id="PRO_0000022174" description="Protein PET117, mitochondrial">
    <location>
        <begin status="unknown"/>
        <end position="107"/>
    </location>
</feature>
<accession>Q02771</accession>
<accession>D3DLW2</accession>
<organism>
    <name type="scientific">Saccharomyces cerevisiae (strain ATCC 204508 / S288c)</name>
    <name type="common">Baker's yeast</name>
    <dbReference type="NCBI Taxonomy" id="559292"/>
    <lineage>
        <taxon>Eukaryota</taxon>
        <taxon>Fungi</taxon>
        <taxon>Dikarya</taxon>
        <taxon>Ascomycota</taxon>
        <taxon>Saccharomycotina</taxon>
        <taxon>Saccharomycetes</taxon>
        <taxon>Saccharomycetales</taxon>
        <taxon>Saccharomycetaceae</taxon>
        <taxon>Saccharomyces</taxon>
    </lineage>
</organism>
<keyword id="KW-0496">Mitochondrion</keyword>
<keyword id="KW-1185">Reference proteome</keyword>
<keyword id="KW-0809">Transit peptide</keyword>
<dbReference type="EMBL" id="L06066">
    <property type="protein sequence ID" value="AAA34854.1"/>
    <property type="molecule type" value="Genomic_DNA"/>
</dbReference>
<dbReference type="EMBL" id="X70012">
    <property type="protein sequence ID" value="CAA49612.1"/>
    <property type="molecule type" value="Genomic_DNA"/>
</dbReference>
<dbReference type="EMBL" id="U18813">
    <property type="protein sequence ID" value="AAB64594.1"/>
    <property type="molecule type" value="Genomic_DNA"/>
</dbReference>
<dbReference type="EMBL" id="AY557778">
    <property type="protein sequence ID" value="AAS56104.1"/>
    <property type="molecule type" value="Genomic_DNA"/>
</dbReference>
<dbReference type="EMBL" id="BK006939">
    <property type="protein sequence ID" value="DAA07716.1"/>
    <property type="molecule type" value="Genomic_DNA"/>
</dbReference>
<dbReference type="PIR" id="S28923">
    <property type="entry name" value="S28923"/>
</dbReference>
<dbReference type="RefSeq" id="NP_010979.1">
    <property type="nucleotide sequence ID" value="NM_001178949.1"/>
</dbReference>
<dbReference type="BioGRID" id="36799">
    <property type="interactions" value="137"/>
</dbReference>
<dbReference type="DIP" id="DIP-5118N"/>
<dbReference type="FunCoup" id="Q02771">
    <property type="interactions" value="53"/>
</dbReference>
<dbReference type="STRING" id="4932.YER058W"/>
<dbReference type="PaxDb" id="4932-YER058W"/>
<dbReference type="PeptideAtlas" id="Q02771"/>
<dbReference type="EnsemblFungi" id="YER058W_mRNA">
    <property type="protein sequence ID" value="YER058W"/>
    <property type="gene ID" value="YER058W"/>
</dbReference>
<dbReference type="GeneID" id="856786"/>
<dbReference type="KEGG" id="sce:YER058W"/>
<dbReference type="AGR" id="SGD:S000000860"/>
<dbReference type="SGD" id="S000000860">
    <property type="gene designation" value="PET117"/>
</dbReference>
<dbReference type="VEuPathDB" id="FungiDB:YER058W"/>
<dbReference type="eggNOG" id="ENOG502S49F">
    <property type="taxonomic scope" value="Eukaryota"/>
</dbReference>
<dbReference type="HOGENOM" id="CLU_161486_0_0_1"/>
<dbReference type="InParanoid" id="Q02771"/>
<dbReference type="OMA" id="VHYVQEL"/>
<dbReference type="OrthoDB" id="76305at2759"/>
<dbReference type="BioCyc" id="YEAST:G3O-30235-MONOMER"/>
<dbReference type="BioGRID-ORCS" id="856786">
    <property type="hits" value="10 hits in 10 CRISPR screens"/>
</dbReference>
<dbReference type="PRO" id="PR:Q02771"/>
<dbReference type="Proteomes" id="UP000002311">
    <property type="component" value="Chromosome V"/>
</dbReference>
<dbReference type="RNAct" id="Q02771">
    <property type="molecule type" value="protein"/>
</dbReference>
<dbReference type="GO" id="GO:0005739">
    <property type="term" value="C:mitochondrion"/>
    <property type="evidence" value="ECO:0007005"/>
    <property type="project" value="SGD"/>
</dbReference>
<dbReference type="GO" id="GO:0033617">
    <property type="term" value="P:mitochondrial cytochrome c oxidase assembly"/>
    <property type="evidence" value="ECO:0000315"/>
    <property type="project" value="SGD"/>
</dbReference>
<dbReference type="InterPro" id="IPR031568">
    <property type="entry name" value="Pet117"/>
</dbReference>
<dbReference type="PANTHER" id="PTHR28163">
    <property type="entry name" value="PROTEIN PET117 HOMOLOG, MITOCHONDRIAL"/>
    <property type="match status" value="1"/>
</dbReference>
<dbReference type="PANTHER" id="PTHR28163:SF1">
    <property type="entry name" value="PROTEIN PET117 HOMOLOG, MITOCHONDRIAL"/>
    <property type="match status" value="1"/>
</dbReference>
<dbReference type="Pfam" id="PF15786">
    <property type="entry name" value="PET117"/>
    <property type="match status" value="1"/>
</dbReference>
<evidence type="ECO:0000255" key="1"/>
<evidence type="ECO:0000269" key="2">
    <source>
    </source>
</evidence>
<evidence type="ECO:0000269" key="3">
    <source>
    </source>
</evidence>
<evidence type="ECO:0000305" key="4"/>
<protein>
    <recommendedName>
        <fullName>Protein PET117, mitochondrial</fullName>
    </recommendedName>
</protein>
<proteinExistence type="evidence at protein level"/>
<comment type="function">
    <text evidence="3">Involved in the assembly of cytochrome c oxidase.</text>
</comment>
<comment type="subcellular location">
    <subcellularLocation>
        <location evidence="2">Mitochondrion</location>
    </subcellularLocation>
</comment>
<comment type="similarity">
    <text evidence="4">Belongs to the PET117 family.</text>
</comment>
<sequence>MSRASKITFAASCLITAATVVGVHYVQEMERETLHQGPIKDAKRVEEKRLRKTNGVASLDPTKERKRYFNMSEHEEQKELRKKYETMQPLSGEVVTKDGEVVKESKK</sequence>
<reference key="1">
    <citation type="journal article" date="1993" name="Curr. Genet.">
        <title>Sequence and chromosomal localization of two PET genes required for cytochrome c oxidase assembly in Saccharomyces cerevisiae.</title>
        <authorList>
            <person name="McEwen J.E."/>
            <person name="Hong K.H."/>
            <person name="Park S."/>
            <person name="Preciado G.T."/>
        </authorList>
    </citation>
    <scope>NUCLEOTIDE SEQUENCE [GENOMIC DNA]</scope>
    <scope>FUNCTION</scope>
</reference>
<reference key="2">
    <citation type="journal article" date="1997" name="Nature">
        <title>The nucleotide sequence of Saccharomyces cerevisiae chromosome V.</title>
        <authorList>
            <person name="Dietrich F.S."/>
            <person name="Mulligan J.T."/>
            <person name="Hennessy K.M."/>
            <person name="Yelton M.A."/>
            <person name="Allen E."/>
            <person name="Araujo R."/>
            <person name="Aviles E."/>
            <person name="Berno A."/>
            <person name="Brennan T."/>
            <person name="Carpenter J."/>
            <person name="Chen E."/>
            <person name="Cherry J.M."/>
            <person name="Chung E."/>
            <person name="Duncan M."/>
            <person name="Guzman E."/>
            <person name="Hartzell G."/>
            <person name="Hunicke-Smith S."/>
            <person name="Hyman R.W."/>
            <person name="Kayser A."/>
            <person name="Komp C."/>
            <person name="Lashkari D."/>
            <person name="Lew H."/>
            <person name="Lin D."/>
            <person name="Mosedale D."/>
            <person name="Nakahara K."/>
            <person name="Namath A."/>
            <person name="Norgren R."/>
            <person name="Oefner P."/>
            <person name="Oh C."/>
            <person name="Petel F.X."/>
            <person name="Roberts D."/>
            <person name="Sehl P."/>
            <person name="Schramm S."/>
            <person name="Shogren T."/>
            <person name="Smith V."/>
            <person name="Taylor P."/>
            <person name="Wei Y."/>
            <person name="Botstein D."/>
            <person name="Davis R.W."/>
        </authorList>
    </citation>
    <scope>NUCLEOTIDE SEQUENCE [LARGE SCALE GENOMIC DNA]</scope>
    <source>
        <strain>ATCC 204508 / S288c</strain>
    </source>
</reference>
<reference key="3">
    <citation type="journal article" date="2014" name="G3 (Bethesda)">
        <title>The reference genome sequence of Saccharomyces cerevisiae: Then and now.</title>
        <authorList>
            <person name="Engel S.R."/>
            <person name="Dietrich F.S."/>
            <person name="Fisk D.G."/>
            <person name="Binkley G."/>
            <person name="Balakrishnan R."/>
            <person name="Costanzo M.C."/>
            <person name="Dwight S.S."/>
            <person name="Hitz B.C."/>
            <person name="Karra K."/>
            <person name="Nash R.S."/>
            <person name="Weng S."/>
            <person name="Wong E.D."/>
            <person name="Lloyd P."/>
            <person name="Skrzypek M.S."/>
            <person name="Miyasato S.R."/>
            <person name="Simison M."/>
            <person name="Cherry J.M."/>
        </authorList>
    </citation>
    <scope>GENOME REANNOTATION</scope>
    <source>
        <strain>ATCC 204508 / S288c</strain>
    </source>
</reference>
<reference key="4">
    <citation type="journal article" date="2007" name="Genome Res.">
        <title>Approaching a complete repository of sequence-verified protein-encoding clones for Saccharomyces cerevisiae.</title>
        <authorList>
            <person name="Hu Y."/>
            <person name="Rolfs A."/>
            <person name="Bhullar B."/>
            <person name="Murthy T.V.S."/>
            <person name="Zhu C."/>
            <person name="Berger M.F."/>
            <person name="Camargo A.A."/>
            <person name="Kelley F."/>
            <person name="McCarron S."/>
            <person name="Jepson D."/>
            <person name="Richardson A."/>
            <person name="Raphael J."/>
            <person name="Moreira D."/>
            <person name="Taycher E."/>
            <person name="Zuo D."/>
            <person name="Mohr S."/>
            <person name="Kane M.F."/>
            <person name="Williamson J."/>
            <person name="Simpson A.J.G."/>
            <person name="Bulyk M.L."/>
            <person name="Harlow E."/>
            <person name="Marsischky G."/>
            <person name="Kolodner R.D."/>
            <person name="LaBaer J."/>
        </authorList>
    </citation>
    <scope>NUCLEOTIDE SEQUENCE [GENOMIC DNA]</scope>
    <source>
        <strain>ATCC 204508 / S288c</strain>
    </source>
</reference>
<reference key="5">
    <citation type="journal article" date="2006" name="J. Proteome Res.">
        <title>Toward the complete yeast mitochondrial proteome: multidimensional separation techniques for mitochondrial proteomics.</title>
        <authorList>
            <person name="Reinders J."/>
            <person name="Zahedi R.P."/>
            <person name="Pfanner N."/>
            <person name="Meisinger C."/>
            <person name="Sickmann A."/>
        </authorList>
    </citation>
    <scope>SUBCELLULAR LOCATION [LARGE SCALE ANALYSIS]</scope>
    <scope>IDENTIFICATION BY MASS SPECTROMETRY</scope>
</reference>